<gene>
    <name evidence="6" type="primary">ATOH1</name>
    <name type="synonym">ATH1</name>
    <name type="synonym">BHLHA14</name>
</gene>
<evidence type="ECO:0000250" key="1">
    <source>
        <dbReference type="UniProtKB" id="P48985"/>
    </source>
</evidence>
<evidence type="ECO:0000255" key="2">
    <source>
        <dbReference type="PROSITE-ProRule" id="PRU00981"/>
    </source>
</evidence>
<evidence type="ECO:0000256" key="3">
    <source>
        <dbReference type="SAM" id="MobiDB-lite"/>
    </source>
</evidence>
<evidence type="ECO:0000269" key="4">
    <source>
    </source>
</evidence>
<evidence type="ECO:0000305" key="5"/>
<evidence type="ECO:0000312" key="6">
    <source>
        <dbReference type="HGNC" id="HGNC:797"/>
    </source>
</evidence>
<accession>Q92858</accession>
<accession>Q14CT9</accession>
<comment type="function">
    <text evidence="1">Transcriptional regulator. Activates E box-dependent transcription in collaboration with TCF3/E47, but the activity is completely antagonized by the negative regulator of neurogenesis HES1. Plays a role in the differentiation of subsets of neural cells by activating E box-dependent transcription (By similarity).</text>
</comment>
<comment type="subunit">
    <text>Efficient DNA binding requires dimerization with another bHLH protein.</text>
</comment>
<comment type="subcellular location">
    <subcellularLocation>
        <location evidence="5">Nucleus</location>
    </subcellularLocation>
</comment>
<comment type="disease" evidence="4">
    <disease id="DI-06625">
        <name>Deafness, autosomal dominant, 89</name>
        <acronym>DFNA89</acronym>
        <description>An autosomal dominant form of non-syndromic deafness characterized by progressive hearing loss, with onset at birth or early childhood.</description>
        <dbReference type="MIM" id="620284"/>
    </disease>
    <text>The disease is caused by variants affecting the gene represented in this entry.</text>
</comment>
<feature type="chain" id="PRO_0000127139" description="Transcription factor ATOH1">
    <location>
        <begin position="1"/>
        <end position="354"/>
    </location>
</feature>
<feature type="domain" description="bHLH" evidence="2">
    <location>
        <begin position="159"/>
        <end position="211"/>
    </location>
</feature>
<feature type="region of interest" description="Disordered" evidence="3">
    <location>
        <begin position="1"/>
        <end position="55"/>
    </location>
</feature>
<feature type="region of interest" description="Disordered" evidence="3">
    <location>
        <begin position="91"/>
        <end position="122"/>
    </location>
</feature>
<feature type="region of interest" description="Disordered" evidence="3">
    <location>
        <begin position="216"/>
        <end position="277"/>
    </location>
</feature>
<feature type="region of interest" description="Disordered" evidence="3">
    <location>
        <begin position="312"/>
        <end position="354"/>
    </location>
</feature>
<feature type="compositionally biased region" description="Basic and acidic residues" evidence="3">
    <location>
        <begin position="1"/>
        <end position="21"/>
    </location>
</feature>
<feature type="compositionally biased region" description="Pro residues" evidence="3">
    <location>
        <begin position="26"/>
        <end position="38"/>
    </location>
</feature>
<feature type="compositionally biased region" description="Basic and acidic residues" evidence="3">
    <location>
        <begin position="94"/>
        <end position="107"/>
    </location>
</feature>
<feature type="compositionally biased region" description="Low complexity" evidence="3">
    <location>
        <begin position="108"/>
        <end position="122"/>
    </location>
</feature>
<feature type="compositionally biased region" description="Low complexity" evidence="3">
    <location>
        <begin position="250"/>
        <end position="264"/>
    </location>
</feature>
<feature type="compositionally biased region" description="Basic and acidic residues" evidence="3">
    <location>
        <begin position="335"/>
        <end position="354"/>
    </location>
</feature>
<feature type="sequence variant" id="VAR_049539" description="In dbSNP:rs35182771.">
    <original>H</original>
    <variation>Q</variation>
    <location>
        <position position="237"/>
    </location>
</feature>
<keyword id="KW-0010">Activator</keyword>
<keyword id="KW-0209">Deafness</keyword>
<keyword id="KW-0217">Developmental protein</keyword>
<keyword id="KW-0221">Differentiation</keyword>
<keyword id="KW-0238">DNA-binding</keyword>
<keyword id="KW-0524">Neurogenesis</keyword>
<keyword id="KW-1010">Non-syndromic deafness</keyword>
<keyword id="KW-0539">Nucleus</keyword>
<keyword id="KW-1267">Proteomics identification</keyword>
<keyword id="KW-1185">Reference proteome</keyword>
<keyword id="KW-0804">Transcription</keyword>
<keyword id="KW-0805">Transcription regulation</keyword>
<name>ATOH1_HUMAN</name>
<organism>
    <name type="scientific">Homo sapiens</name>
    <name type="common">Human</name>
    <dbReference type="NCBI Taxonomy" id="9606"/>
    <lineage>
        <taxon>Eukaryota</taxon>
        <taxon>Metazoa</taxon>
        <taxon>Chordata</taxon>
        <taxon>Craniata</taxon>
        <taxon>Vertebrata</taxon>
        <taxon>Euteleostomi</taxon>
        <taxon>Mammalia</taxon>
        <taxon>Eutheria</taxon>
        <taxon>Euarchontoglires</taxon>
        <taxon>Primates</taxon>
        <taxon>Haplorrhini</taxon>
        <taxon>Catarrhini</taxon>
        <taxon>Hominidae</taxon>
        <taxon>Homo</taxon>
    </lineage>
</organism>
<protein>
    <recommendedName>
        <fullName evidence="5">Transcription factor ATOH1</fullName>
    </recommendedName>
    <alternativeName>
        <fullName evidence="6">Atonal bHLH transcription factor 1</fullName>
    </alternativeName>
    <alternativeName>
        <fullName evidence="6">Class A basic helix-loop-helix protein 14</fullName>
        <shortName evidence="6">bHLHa14</shortName>
    </alternativeName>
    <alternativeName>
        <fullName evidence="6">Helix-loop-helix protein hATH-1</fullName>
        <shortName evidence="6">hATH1</shortName>
    </alternativeName>
    <alternativeName>
        <fullName evidence="6">Protein atonal homolog 1</fullName>
    </alternativeName>
</protein>
<proteinExistence type="evidence at protein level"/>
<reference key="1">
    <citation type="journal article" date="1996" name="Hum. Mol. Genet.">
        <title>Evolutionary conservation of sequence and expression of the bHLH protein Atonal suggests a conserved role in neurogenesis.</title>
        <authorList>
            <person name="Ben-Arie N."/>
            <person name="McCall A.E."/>
            <person name="Berkman S."/>
            <person name="Eichele G."/>
            <person name="Bellen H.J."/>
            <person name="Zoghbi H.Y."/>
        </authorList>
    </citation>
    <scope>NUCLEOTIDE SEQUENCE [GENOMIC DNA]</scope>
</reference>
<reference key="2">
    <citation type="journal article" date="2004" name="Genome Res.">
        <title>The status, quality, and expansion of the NIH full-length cDNA project: the Mammalian Gene Collection (MGC).</title>
        <authorList>
            <consortium name="The MGC Project Team"/>
        </authorList>
    </citation>
    <scope>NUCLEOTIDE SEQUENCE [LARGE SCALE MRNA]</scope>
</reference>
<reference key="3">
    <citation type="journal article" date="2020" name="Clin. Genet.">
        <title>Spectrum of genes for inherited hearing loss in the Israeli Jewish population, including the novel human deafness gene ATOH1.</title>
        <authorList>
            <person name="Brownstein Z."/>
            <person name="Gulsuner S."/>
            <person name="Walsh T."/>
            <person name="Martins F.T.A."/>
            <person name="Taiber S."/>
            <person name="Isakov O."/>
            <person name="Lee M.K."/>
            <person name="Bordeynik-Cohen M."/>
            <person name="Birkan M."/>
            <person name="Chang W."/>
            <person name="Casadei S."/>
            <person name="Danial-Farran N."/>
            <person name="Abu-Rayyan A."/>
            <person name="Carlson R."/>
            <person name="Kamal L."/>
            <person name="Arnthorsson A.O."/>
            <person name="Sokolov M."/>
            <person name="Gilony D."/>
            <person name="Lipschitz N."/>
            <person name="Frydman M."/>
            <person name="Davidov B."/>
            <person name="Macarov M."/>
            <person name="Sagi M."/>
            <person name="Vinkler C."/>
            <person name="Poran H."/>
            <person name="Sharony R."/>
            <person name="Samra N."/>
            <person name="Zvi N."/>
            <person name="Baris-Feldman H."/>
            <person name="Singer A."/>
            <person name="Handzel O."/>
            <person name="Hertzano R."/>
            <person name="Ali-Naffaa D."/>
            <person name="Ruhrman-Shahar N."/>
            <person name="Madgar O."/>
            <person name="Sofrin-Drucker E."/>
            <person name="Peleg A."/>
            <person name="Khayat M."/>
            <person name="Shohat M."/>
            <person name="Basel-Salmon L."/>
            <person name="Pras E."/>
            <person name="Lev D."/>
            <person name="Wolf M."/>
            <person name="Steingrimsson E."/>
            <person name="Shomron N."/>
            <person name="Kelley M.W."/>
            <person name="Kanaan M.N."/>
            <person name="Allon-Shalev S."/>
            <person name="King M.C."/>
            <person name="Avraham K.B."/>
        </authorList>
    </citation>
    <scope>INVOLVEMENT IN DFNA89</scope>
</reference>
<dbReference type="EMBL" id="U61148">
    <property type="protein sequence ID" value="AAB41305.1"/>
    <property type="molecule type" value="Genomic_DNA"/>
</dbReference>
<dbReference type="EMBL" id="BC069145">
    <property type="protein sequence ID" value="AAH69145.1"/>
    <property type="molecule type" value="mRNA"/>
</dbReference>
<dbReference type="EMBL" id="BC069594">
    <property type="protein sequence ID" value="AAH69594.1"/>
    <property type="molecule type" value="mRNA"/>
</dbReference>
<dbReference type="EMBL" id="BC069604">
    <property type="protein sequence ID" value="AAH69604.1"/>
    <property type="molecule type" value="mRNA"/>
</dbReference>
<dbReference type="EMBL" id="BC113623">
    <property type="protein sequence ID" value="AAI13624.1"/>
    <property type="molecule type" value="mRNA"/>
</dbReference>
<dbReference type="EMBL" id="BC113625">
    <property type="protein sequence ID" value="AAI13626.1"/>
    <property type="molecule type" value="mRNA"/>
</dbReference>
<dbReference type="CCDS" id="CCDS3638.1"/>
<dbReference type="RefSeq" id="NP_005163.1">
    <property type="nucleotide sequence ID" value="NM_005172.2"/>
</dbReference>
<dbReference type="SMR" id="Q92858"/>
<dbReference type="BioGRID" id="106964">
    <property type="interactions" value="77"/>
</dbReference>
<dbReference type="FunCoup" id="Q92858">
    <property type="interactions" value="1025"/>
</dbReference>
<dbReference type="STRING" id="9606.ENSP00000302216"/>
<dbReference type="iPTMnet" id="Q92858"/>
<dbReference type="PhosphoSitePlus" id="Q92858"/>
<dbReference type="BioMuta" id="ATOH1"/>
<dbReference type="DMDM" id="3913115"/>
<dbReference type="jPOST" id="Q92858"/>
<dbReference type="MassIVE" id="Q92858"/>
<dbReference type="PaxDb" id="9606-ENSP00000302216"/>
<dbReference type="PeptideAtlas" id="Q92858"/>
<dbReference type="ProteomicsDB" id="75551"/>
<dbReference type="Antibodypedia" id="25709">
    <property type="antibodies" value="569 antibodies from 33 providers"/>
</dbReference>
<dbReference type="DNASU" id="474"/>
<dbReference type="Ensembl" id="ENST00000306011.6">
    <property type="protein sequence ID" value="ENSP00000302216.4"/>
    <property type="gene ID" value="ENSG00000172238.6"/>
</dbReference>
<dbReference type="GeneID" id="474"/>
<dbReference type="KEGG" id="hsa:474"/>
<dbReference type="MANE-Select" id="ENST00000306011.6">
    <property type="protein sequence ID" value="ENSP00000302216.4"/>
    <property type="RefSeq nucleotide sequence ID" value="NM_005172.2"/>
    <property type="RefSeq protein sequence ID" value="NP_005163.1"/>
</dbReference>
<dbReference type="UCSC" id="uc003hta.2">
    <property type="organism name" value="human"/>
</dbReference>
<dbReference type="AGR" id="HGNC:797"/>
<dbReference type="CTD" id="474"/>
<dbReference type="DisGeNET" id="474"/>
<dbReference type="GeneCards" id="ATOH1"/>
<dbReference type="HGNC" id="HGNC:797">
    <property type="gene designation" value="ATOH1"/>
</dbReference>
<dbReference type="HPA" id="ENSG00000172238">
    <property type="expression patterns" value="Tissue enriched (intestine)"/>
</dbReference>
<dbReference type="MalaCards" id="ATOH1"/>
<dbReference type="MIM" id="601461">
    <property type="type" value="gene"/>
</dbReference>
<dbReference type="MIM" id="620284">
    <property type="type" value="phenotype"/>
</dbReference>
<dbReference type="neXtProt" id="NX_Q92858"/>
<dbReference type="OpenTargets" id="ENSG00000172238"/>
<dbReference type="PharmGKB" id="PA25095"/>
<dbReference type="VEuPathDB" id="HostDB:ENSG00000172238"/>
<dbReference type="eggNOG" id="KOG4395">
    <property type="taxonomic scope" value="Eukaryota"/>
</dbReference>
<dbReference type="GeneTree" id="ENSGT00940000160064"/>
<dbReference type="HOGENOM" id="CLU_083039_0_0_1"/>
<dbReference type="InParanoid" id="Q92858"/>
<dbReference type="OMA" id="KEMCEMQ"/>
<dbReference type="OrthoDB" id="6161578at2759"/>
<dbReference type="PAN-GO" id="Q92858">
    <property type="GO annotations" value="5 GO annotations based on evolutionary models"/>
</dbReference>
<dbReference type="PhylomeDB" id="Q92858"/>
<dbReference type="TreeFam" id="TF315153"/>
<dbReference type="PathwayCommons" id="Q92858"/>
<dbReference type="SignaLink" id="Q92858"/>
<dbReference type="SIGNOR" id="Q92858"/>
<dbReference type="BioGRID-ORCS" id="474">
    <property type="hits" value="21 hits in 1162 CRISPR screens"/>
</dbReference>
<dbReference type="GeneWiki" id="ATOH1"/>
<dbReference type="GenomeRNAi" id="474"/>
<dbReference type="Pharos" id="Q92858">
    <property type="development level" value="Tbio"/>
</dbReference>
<dbReference type="PRO" id="PR:Q92858"/>
<dbReference type="Proteomes" id="UP000005640">
    <property type="component" value="Chromosome 4"/>
</dbReference>
<dbReference type="RNAct" id="Q92858">
    <property type="molecule type" value="protein"/>
</dbReference>
<dbReference type="Bgee" id="ENSG00000172238">
    <property type="expression patterns" value="Expressed in mucosa of transverse colon and 18 other cell types or tissues"/>
</dbReference>
<dbReference type="GO" id="GO:0000785">
    <property type="term" value="C:chromatin"/>
    <property type="evidence" value="ECO:0000247"/>
    <property type="project" value="NTNU_SB"/>
</dbReference>
<dbReference type="GO" id="GO:0005634">
    <property type="term" value="C:nucleus"/>
    <property type="evidence" value="ECO:0000250"/>
    <property type="project" value="UniProtKB"/>
</dbReference>
<dbReference type="GO" id="GO:0031490">
    <property type="term" value="F:chromatin DNA binding"/>
    <property type="evidence" value="ECO:0007669"/>
    <property type="project" value="Ensembl"/>
</dbReference>
<dbReference type="GO" id="GO:0001228">
    <property type="term" value="F:DNA-binding transcription activator activity, RNA polymerase II-specific"/>
    <property type="evidence" value="ECO:0007669"/>
    <property type="project" value="Ensembl"/>
</dbReference>
<dbReference type="GO" id="GO:0003700">
    <property type="term" value="F:DNA-binding transcription factor activity"/>
    <property type="evidence" value="ECO:0000304"/>
    <property type="project" value="ProtInc"/>
</dbReference>
<dbReference type="GO" id="GO:0000981">
    <property type="term" value="F:DNA-binding transcription factor activity, RNA polymerase II-specific"/>
    <property type="evidence" value="ECO:0000247"/>
    <property type="project" value="NTNU_SB"/>
</dbReference>
<dbReference type="GO" id="GO:0070888">
    <property type="term" value="F:E-box binding"/>
    <property type="evidence" value="ECO:0000318"/>
    <property type="project" value="GO_Central"/>
</dbReference>
<dbReference type="GO" id="GO:0046983">
    <property type="term" value="F:protein dimerization activity"/>
    <property type="evidence" value="ECO:0007669"/>
    <property type="project" value="InterPro"/>
</dbReference>
<dbReference type="GO" id="GO:1990837">
    <property type="term" value="F:sequence-specific double-stranded DNA binding"/>
    <property type="evidence" value="ECO:0000314"/>
    <property type="project" value="ARUK-UCL"/>
</dbReference>
<dbReference type="GO" id="GO:0042668">
    <property type="term" value="P:auditory receptor cell fate determination"/>
    <property type="evidence" value="ECO:0007669"/>
    <property type="project" value="Ensembl"/>
</dbReference>
<dbReference type="GO" id="GO:0042667">
    <property type="term" value="P:auditory receptor cell fate specification"/>
    <property type="evidence" value="ECO:0007669"/>
    <property type="project" value="Ensembl"/>
</dbReference>
<dbReference type="GO" id="GO:0061564">
    <property type="term" value="P:axon development"/>
    <property type="evidence" value="ECO:0000318"/>
    <property type="project" value="GO_Central"/>
</dbReference>
<dbReference type="GO" id="GO:0007411">
    <property type="term" value="P:axon guidance"/>
    <property type="evidence" value="ECO:0007669"/>
    <property type="project" value="Ensembl"/>
</dbReference>
<dbReference type="GO" id="GO:0007417">
    <property type="term" value="P:central nervous system development"/>
    <property type="evidence" value="ECO:0000304"/>
    <property type="project" value="ProtInc"/>
</dbReference>
<dbReference type="GO" id="GO:0021953">
    <property type="term" value="P:central nervous system neuron differentiation"/>
    <property type="evidence" value="ECO:0007669"/>
    <property type="project" value="Ensembl"/>
</dbReference>
<dbReference type="GO" id="GO:0021987">
    <property type="term" value="P:cerebral cortex development"/>
    <property type="evidence" value="ECO:0007669"/>
    <property type="project" value="Ensembl"/>
</dbReference>
<dbReference type="GO" id="GO:1904019">
    <property type="term" value="P:epithelial cell apoptotic process"/>
    <property type="evidence" value="ECO:0007669"/>
    <property type="project" value="Ensembl"/>
</dbReference>
<dbReference type="GO" id="GO:0042472">
    <property type="term" value="P:inner ear morphogenesis"/>
    <property type="evidence" value="ECO:0007669"/>
    <property type="project" value="Ensembl"/>
</dbReference>
<dbReference type="GO" id="GO:1904036">
    <property type="term" value="P:negative regulation of epithelial cell apoptotic process"/>
    <property type="evidence" value="ECO:0007669"/>
    <property type="project" value="Ensembl"/>
</dbReference>
<dbReference type="GO" id="GO:0014014">
    <property type="term" value="P:negative regulation of gliogenesis"/>
    <property type="evidence" value="ECO:0007669"/>
    <property type="project" value="Ensembl"/>
</dbReference>
<dbReference type="GO" id="GO:0097402">
    <property type="term" value="P:neuroblast migration"/>
    <property type="evidence" value="ECO:0007669"/>
    <property type="project" value="Ensembl"/>
</dbReference>
<dbReference type="GO" id="GO:0048663">
    <property type="term" value="P:neuron fate commitment"/>
    <property type="evidence" value="ECO:0000318"/>
    <property type="project" value="GO_Central"/>
</dbReference>
<dbReference type="GO" id="GO:0001764">
    <property type="term" value="P:neuron migration"/>
    <property type="evidence" value="ECO:0007669"/>
    <property type="project" value="Ensembl"/>
</dbReference>
<dbReference type="GO" id="GO:0007219">
    <property type="term" value="P:Notch signaling pathway"/>
    <property type="evidence" value="ECO:0007669"/>
    <property type="project" value="Ensembl"/>
</dbReference>
<dbReference type="GO" id="GO:0045609">
    <property type="term" value="P:positive regulation of inner ear auditory receptor cell differentiation"/>
    <property type="evidence" value="ECO:0007669"/>
    <property type="project" value="Ensembl"/>
</dbReference>
<dbReference type="GO" id="GO:0045666">
    <property type="term" value="P:positive regulation of neuron differentiation"/>
    <property type="evidence" value="ECO:0000250"/>
    <property type="project" value="UniProtKB"/>
</dbReference>
<dbReference type="GO" id="GO:0045944">
    <property type="term" value="P:positive regulation of transcription by RNA polymerase II"/>
    <property type="evidence" value="ECO:0000318"/>
    <property type="project" value="GO_Central"/>
</dbReference>
<dbReference type="GO" id="GO:0007423">
    <property type="term" value="P:sensory organ development"/>
    <property type="evidence" value="ECO:0000318"/>
    <property type="project" value="GO_Central"/>
</dbReference>
<dbReference type="GO" id="GO:0006366">
    <property type="term" value="P:transcription by RNA polymerase II"/>
    <property type="evidence" value="ECO:0000304"/>
    <property type="project" value="ProtInc"/>
</dbReference>
<dbReference type="CDD" id="cd19713">
    <property type="entry name" value="bHLH_TS_ATOH1"/>
    <property type="match status" value="1"/>
</dbReference>
<dbReference type="FunFam" id="4.10.280.10:FF:000025">
    <property type="entry name" value="protein atonal homolog 7"/>
    <property type="match status" value="1"/>
</dbReference>
<dbReference type="Gene3D" id="4.10.280.10">
    <property type="entry name" value="Helix-loop-helix DNA-binding domain"/>
    <property type="match status" value="1"/>
</dbReference>
<dbReference type="InterPro" id="IPR032661">
    <property type="entry name" value="ATOH1_bHLH"/>
</dbReference>
<dbReference type="InterPro" id="IPR011598">
    <property type="entry name" value="bHLH_dom"/>
</dbReference>
<dbReference type="InterPro" id="IPR050359">
    <property type="entry name" value="bHLH_transcription_factors"/>
</dbReference>
<dbReference type="InterPro" id="IPR036638">
    <property type="entry name" value="HLH_DNA-bd_sf"/>
</dbReference>
<dbReference type="PANTHER" id="PTHR19290">
    <property type="entry name" value="BASIC HELIX-LOOP-HELIX PROTEIN NEUROGENIN-RELATED"/>
    <property type="match status" value="1"/>
</dbReference>
<dbReference type="PANTHER" id="PTHR19290:SF82">
    <property type="entry name" value="TRANSCRIPTION FACTOR ATOH1"/>
    <property type="match status" value="1"/>
</dbReference>
<dbReference type="Pfam" id="PF00010">
    <property type="entry name" value="HLH"/>
    <property type="match status" value="1"/>
</dbReference>
<dbReference type="SMART" id="SM00353">
    <property type="entry name" value="HLH"/>
    <property type="match status" value="1"/>
</dbReference>
<dbReference type="SUPFAM" id="SSF47459">
    <property type="entry name" value="HLH, helix-loop-helix DNA-binding domain"/>
    <property type="match status" value="1"/>
</dbReference>
<dbReference type="PROSITE" id="PS50888">
    <property type="entry name" value="BHLH"/>
    <property type="match status" value="1"/>
</dbReference>
<sequence>MSRLLHAEEWAEVKELGDHHRQPQPHHLPQPPPPPQPPATLQAREHPVYPPELSLLDSTDPRAWLAPTLQGICTARAAQYLLHSPELGASEAAAPRDEVDGRGELVRRSSGGASSSKSPGPVKVREQLCKLKGGVVVDELGCSRQRAPSSKQVNGVQKQRRLAANARERRRMHGLNHAFDQLRNVIPSFNNDKKLSKYETLQMAQIYINALSELLQTPSGGEQPPPPPASCKSDHHHLRTAASYEGGAGNATAAGAQQASGGSQRPTPPGSCRTRFSAPASAGGYSVQLDALHFSTFEDSALTAMMAQKNLSPSLPGSILQPVQEENSKTSPRSHRSDGEFSPHSHYSDSDEAS</sequence>